<evidence type="ECO:0000250" key="1"/>
<evidence type="ECO:0000255" key="2"/>
<evidence type="ECO:0000305" key="3"/>
<dbReference type="EMBL" id="AF076621">
    <property type="protein sequence ID" value="AAD03840.1"/>
    <property type="molecule type" value="Genomic_RNA"/>
</dbReference>
<dbReference type="EMBL" id="AY427798">
    <property type="protein sequence ID" value="AAS17959.1"/>
    <property type="status" value="ALT_FRAME"/>
    <property type="molecule type" value="Genomic_RNA"/>
</dbReference>
<dbReference type="RefSeq" id="YP_337907.1">
    <property type="nucleotide sequence ID" value="NC_007447.1"/>
</dbReference>
<dbReference type="GlyCosmos" id="O90304">
    <property type="glycosylation" value="20 sites, No reported glycans"/>
</dbReference>
<dbReference type="GeneID" id="3707766"/>
<dbReference type="KEGG" id="vg:3707766"/>
<dbReference type="Proteomes" id="UP000000355">
    <property type="component" value="Segment"/>
</dbReference>
<dbReference type="GO" id="GO:0016020">
    <property type="term" value="C:membrane"/>
    <property type="evidence" value="ECO:0007669"/>
    <property type="project" value="UniProtKB-KW"/>
</dbReference>
<dbReference type="GO" id="GO:0019031">
    <property type="term" value="C:viral envelope"/>
    <property type="evidence" value="ECO:0007669"/>
    <property type="project" value="UniProtKB-KW"/>
</dbReference>
<dbReference type="GO" id="GO:0055036">
    <property type="term" value="C:virion membrane"/>
    <property type="evidence" value="ECO:0007669"/>
    <property type="project" value="UniProtKB-SubCell"/>
</dbReference>
<dbReference type="GO" id="GO:0039663">
    <property type="term" value="P:membrane fusion involved in viral entry into host cell"/>
    <property type="evidence" value="ECO:0007669"/>
    <property type="project" value="UniProtKB-KW"/>
</dbReference>
<dbReference type="GO" id="GO:0046718">
    <property type="term" value="P:symbiont entry into host cell"/>
    <property type="evidence" value="ECO:0007669"/>
    <property type="project" value="UniProtKB-KW"/>
</dbReference>
<dbReference type="GO" id="GO:0019062">
    <property type="term" value="P:virion attachment to host cell"/>
    <property type="evidence" value="ECO:0007669"/>
    <property type="project" value="UniProtKB-KW"/>
</dbReference>
<dbReference type="InterPro" id="IPR031412">
    <property type="entry name" value="S_torovirinae"/>
</dbReference>
<dbReference type="Pfam" id="PF17072">
    <property type="entry name" value="Spike_torovirin"/>
    <property type="match status" value="1"/>
</dbReference>
<feature type="signal peptide" evidence="2">
    <location>
        <begin position="1"/>
        <end position="20"/>
    </location>
</feature>
<feature type="chain" id="PRO_0000283903" description="Spike glycoprotein">
    <location>
        <begin position="21"/>
        <end position="1583"/>
    </location>
</feature>
<feature type="topological domain" description="Virion surface" evidence="2">
    <location>
        <begin position="21"/>
        <end position="1553"/>
    </location>
</feature>
<feature type="transmembrane region" description="Helical" evidence="2">
    <location>
        <begin position="1554"/>
        <end position="1574"/>
    </location>
</feature>
<feature type="topological domain" description="Intravirion" evidence="2">
    <location>
        <begin position="1575"/>
        <end position="1583"/>
    </location>
</feature>
<feature type="glycosylation site" description="N-linked (GlcNAc...) asparagine; by host" evidence="2">
    <location>
        <position position="25"/>
    </location>
</feature>
<feature type="glycosylation site" description="N-linked (GlcNAc...) asparagine; by host" evidence="2">
    <location>
        <position position="82"/>
    </location>
</feature>
<feature type="glycosylation site" description="N-linked (GlcNAc...) asparagine; by host" evidence="2">
    <location>
        <position position="252"/>
    </location>
</feature>
<feature type="glycosylation site" description="N-linked (GlcNAc...) asparagine; by host" evidence="2">
    <location>
        <position position="384"/>
    </location>
</feature>
<feature type="glycosylation site" description="N-linked (GlcNAc...) asparagine; by host" evidence="2">
    <location>
        <position position="494"/>
    </location>
</feature>
<feature type="glycosylation site" description="N-linked (GlcNAc...) asparagine; by host" evidence="2">
    <location>
        <position position="573"/>
    </location>
</feature>
<feature type="glycosylation site" description="N-linked (GlcNAc...) asparagine; by host" evidence="2">
    <location>
        <position position="842"/>
    </location>
</feature>
<feature type="glycosylation site" description="N-linked (GlcNAc...) asparagine; by host" evidence="2">
    <location>
        <position position="936"/>
    </location>
</feature>
<feature type="glycosylation site" description="N-linked (GlcNAc...) asparagine; by host" evidence="2">
    <location>
        <position position="970"/>
    </location>
</feature>
<feature type="glycosylation site" description="N-linked (GlcNAc...) asparagine; by host" evidence="2">
    <location>
        <position position="1268"/>
    </location>
</feature>
<feature type="glycosylation site" description="N-linked (GlcNAc...) asparagine; by host" evidence="2">
    <location>
        <position position="1299"/>
    </location>
</feature>
<feature type="glycosylation site" description="N-linked (GlcNAc...) asparagine; by host" evidence="2">
    <location>
        <position position="1387"/>
    </location>
</feature>
<feature type="glycosylation site" description="N-linked (GlcNAc...) asparagine; by host" evidence="2">
    <location>
        <position position="1391"/>
    </location>
</feature>
<feature type="glycosylation site" description="N-linked (GlcNAc...) asparagine; by host" evidence="2">
    <location>
        <position position="1430"/>
    </location>
</feature>
<feature type="glycosylation site" description="N-linked (GlcNAc...) asparagine; by host" evidence="2">
    <location>
        <position position="1433"/>
    </location>
</feature>
<feature type="glycosylation site" description="N-linked (GlcNAc...) asparagine; by host" evidence="2">
    <location>
        <position position="1440"/>
    </location>
</feature>
<feature type="glycosylation site" description="N-linked (GlcNAc...) asparagine; by host" evidence="2">
    <location>
        <position position="1485"/>
    </location>
</feature>
<feature type="glycosylation site" description="N-linked (GlcNAc...) asparagine; by host" evidence="2">
    <location>
        <position position="1489"/>
    </location>
</feature>
<feature type="glycosylation site" description="N-linked (GlcNAc...) asparagine; by host" evidence="2">
    <location>
        <position position="1497"/>
    </location>
</feature>
<feature type="glycosylation site" description="N-linked (GlcNAc...) asparagine; by host" evidence="2">
    <location>
        <position position="1517"/>
    </location>
</feature>
<feature type="sequence variant">
    <original>P</original>
    <variation>A</variation>
    <location>
        <position position="9"/>
    </location>
</feature>
<feature type="sequence variant">
    <original>S</original>
    <variation>T</variation>
    <location>
        <position position="27"/>
    </location>
</feature>
<feature type="sequence variant">
    <original>TT</original>
    <variation>ID</variation>
    <location>
        <begin position="59"/>
        <end position="60"/>
    </location>
</feature>
<feature type="sequence variant">
    <original>S</original>
    <variation>N</variation>
    <location>
        <position position="72"/>
    </location>
</feature>
<feature type="sequence variant">
    <original>VST</original>
    <variation>QSF</variation>
    <location>
        <begin position="111"/>
        <end position="113"/>
    </location>
</feature>
<feature type="sequence variant">
    <original>A</original>
    <variation>V</variation>
    <location>
        <position position="136"/>
    </location>
</feature>
<feature type="sequence variant">
    <original>ESR</original>
    <variation>DSW</variation>
    <location>
        <begin position="141"/>
        <end position="143"/>
    </location>
</feature>
<feature type="sequence variant">
    <original>H</original>
    <variation>Y</variation>
    <location>
        <position position="158"/>
    </location>
</feature>
<feature type="sequence variant">
    <original>H</original>
    <variation>R</variation>
    <location>
        <position position="169"/>
    </location>
</feature>
<feature type="sequence variant">
    <original>R</original>
    <variation>C</variation>
    <location>
        <position position="177"/>
    </location>
</feature>
<feature type="sequence variant">
    <original>L</original>
    <variation>S</variation>
    <location>
        <position position="182"/>
    </location>
</feature>
<feature type="sequence variant">
    <original>V</original>
    <variation>L</variation>
    <location>
        <position position="212"/>
    </location>
</feature>
<feature type="sequence variant">
    <original>S</original>
    <variation>P</variation>
    <location>
        <position position="219"/>
    </location>
</feature>
<feature type="sequence variant">
    <original>SCN</original>
    <variation>GCK</variation>
    <location>
        <begin position="250"/>
        <end position="252"/>
    </location>
</feature>
<feature type="sequence variant">
    <original>ASAIILRSQLIVALAQKLSRTVGVNKAV</original>
    <variation>ITAVTLPPDLKVPVVQKVTKRLGVTSPD</variation>
    <location>
        <begin position="267"/>
        <end position="294"/>
    </location>
</feature>
<feature type="sequence variant">
    <original>FL</original>
    <variation>LI</variation>
    <location>
        <begin position="298"/>
        <end position="299"/>
    </location>
</feature>
<feature type="sequence variant">
    <original>PYH</original>
    <variation>AYQ</variation>
    <location>
        <begin position="302"/>
        <end position="304"/>
    </location>
</feature>
<feature type="sequence variant">
    <original>LVNF</original>
    <variation>QAAI</variation>
    <location>
        <begin position="308"/>
        <end position="311"/>
    </location>
</feature>
<feature type="sequence variant">
    <original>PLCKSLR</original>
    <variation>ALSNSLY</variation>
    <location>
        <begin position="320"/>
        <end position="326"/>
    </location>
</feature>
<feature type="sequence variant">
    <original>ATYSALS</original>
    <variation>LVLTDLC</variation>
    <location>
        <begin position="330"/>
        <end position="336"/>
    </location>
</feature>
<feature type="sequence variant">
    <original>CCLY</original>
    <variation>AVFT</variation>
    <location>
        <begin position="357"/>
        <end position="360"/>
    </location>
</feature>
<feature type="sequence variant">
    <original>S</original>
    <variation>N</variation>
    <location>
        <position position="368"/>
    </location>
</feature>
<feature type="sequence variant">
    <original>N</original>
    <variation>K</variation>
    <location>
        <position position="378"/>
    </location>
</feature>
<feature type="sequence variant">
    <original>A</original>
    <variation>T</variation>
    <location>
        <position position="383"/>
    </location>
</feature>
<feature type="sequence variant">
    <original>G</original>
    <variation>GD</variation>
    <location>
        <position position="457"/>
    </location>
</feature>
<feature type="sequence variant">
    <original>NGVI</original>
    <variation>KDVT</variation>
    <location>
        <begin position="464"/>
        <end position="467"/>
    </location>
</feature>
<feature type="sequence variant">
    <original>S</original>
    <variation>P</variation>
    <location>
        <position position="475"/>
    </location>
</feature>
<feature type="sequence variant">
    <original>SFVR</original>
    <variation>QFGS</variation>
    <location>
        <begin position="507"/>
        <end position="510"/>
    </location>
</feature>
<feature type="sequence variant">
    <original>Q</original>
    <variation>H</variation>
    <location>
        <position position="530"/>
    </location>
</feature>
<feature type="sequence variant">
    <original>V</original>
    <variation>L</variation>
    <location>
        <position position="536"/>
    </location>
</feature>
<feature type="sequence variant">
    <original>G</original>
    <variation>A</variation>
    <location>
        <position position="540"/>
    </location>
</feature>
<feature type="sequence variant">
    <original>I</original>
    <variation>V</variation>
    <location>
        <position position="550"/>
    </location>
</feature>
<feature type="sequence variant">
    <original>AQSS</original>
    <variation>TQTQD</variation>
    <location>
        <begin position="558"/>
        <end position="561"/>
    </location>
</feature>
<feature type="sequence variant">
    <original>I</original>
    <variation>V</variation>
    <location>
        <position position="617"/>
    </location>
</feature>
<feature type="sequence variant">
    <original>I</original>
    <variation>S</variation>
    <location>
        <position position="643"/>
    </location>
</feature>
<feature type="sequence variant">
    <original>I</original>
    <variation>S</variation>
    <location>
        <position position="654"/>
    </location>
</feature>
<feature type="sequence variant">
    <original>TT</original>
    <variation>LA</variation>
    <location>
        <begin position="683"/>
        <end position="684"/>
    </location>
</feature>
<feature type="sequence variant">
    <original>A</original>
    <variation>P</variation>
    <location>
        <position position="690"/>
    </location>
</feature>
<feature type="sequence variant">
    <original>D</original>
    <variation>G</variation>
    <location>
        <position position="713"/>
    </location>
</feature>
<feature type="sequence variant">
    <original>LSTMVPSI</original>
    <variation>TTMVAPTL</variation>
    <location>
        <begin position="718"/>
        <end position="725"/>
    </location>
</feature>
<feature type="sequence variant">
    <original>RN</original>
    <variation>QT</variation>
    <location>
        <begin position="753"/>
        <end position="754"/>
    </location>
</feature>
<feature type="sequence variant">
    <original>D</original>
    <variation>S</variation>
    <location>
        <position position="778"/>
    </location>
</feature>
<feature type="sequence variant">
    <original>F</original>
    <variation>S</variation>
    <location>
        <position position="787"/>
    </location>
</feature>
<feature type="sequence variant">
    <original>S</original>
    <variation>G</variation>
    <location>
        <position position="813"/>
    </location>
</feature>
<feature type="sequence variant">
    <original>Y</original>
    <variation>H</variation>
    <location>
        <position position="849"/>
    </location>
</feature>
<feature type="sequence variant">
    <original>T</original>
    <variation>I</variation>
    <location>
        <position position="853"/>
    </location>
</feature>
<feature type="sequence variant">
    <original>T</original>
    <variation>M</variation>
    <location>
        <position position="856"/>
    </location>
</feature>
<feature type="sequence variant">
    <original>E</original>
    <variation>D</variation>
    <location>
        <position position="861"/>
    </location>
</feature>
<feature type="sequence variant">
    <original>T</original>
    <variation>I</variation>
    <location>
        <position position="978"/>
    </location>
</feature>
<feature type="sequence variant">
    <original>SA</original>
    <variation>RT</variation>
    <location>
        <begin position="1060"/>
        <end position="1061"/>
    </location>
</feature>
<feature type="sequence variant">
    <original>I</original>
    <variation>T</variation>
    <location>
        <position position="1067"/>
    </location>
</feature>
<feature type="sequence variant">
    <original>H</original>
    <variation>R</variation>
    <location>
        <position position="1071"/>
    </location>
</feature>
<feature type="sequence variant">
    <original>I</original>
    <variation>T</variation>
    <location>
        <position position="1135"/>
    </location>
</feature>
<feature type="sequence variant">
    <original>D</original>
    <variation>N</variation>
    <location>
        <position position="1147"/>
    </location>
</feature>
<feature type="sequence variant">
    <original>AG</original>
    <variation>TD</variation>
    <location>
        <begin position="1153"/>
        <end position="1154"/>
    </location>
</feature>
<feature type="sequence variant">
    <original>T</original>
    <variation>E</variation>
    <location>
        <position position="1157"/>
    </location>
</feature>
<feature type="sequence variant">
    <original>E</original>
    <variation>K</variation>
    <location>
        <position position="1161"/>
    </location>
</feature>
<feature type="sequence variant">
    <original>TSA</original>
    <variation>QVT</variation>
    <location>
        <begin position="1180"/>
        <end position="1182"/>
    </location>
</feature>
<feature type="sequence variant">
    <original>F</original>
    <variation>L</variation>
    <location>
        <position position="1192"/>
    </location>
</feature>
<feature type="sequence variant">
    <original>FQIC</original>
    <variation>SQMF</variation>
    <location>
        <begin position="1257"/>
        <end position="1260"/>
    </location>
</feature>
<feature type="sequence variant">
    <location>
        <position position="1270"/>
    </location>
</feature>
<feature type="sequence variant">
    <original>L</original>
    <variation>F</variation>
    <location>
        <position position="1278"/>
    </location>
</feature>
<feature type="sequence variant">
    <original>A</original>
    <variation>S</variation>
    <location>
        <position position="1378"/>
    </location>
</feature>
<feature type="sequence variant">
    <original>EL</original>
    <variation>GV</variation>
    <location>
        <begin position="1495"/>
        <end position="1496"/>
    </location>
</feature>
<gene>
    <name type="primary">S</name>
    <name type="synonym">P</name>
</gene>
<comment type="function">
    <text evidence="1">Mediates the binding of virions to the host cell receptor and is involved in membrane fusion.</text>
</comment>
<comment type="subunit">
    <text evidence="1">Homotrimer.</text>
</comment>
<comment type="subcellular location">
    <subcellularLocation>
        <location evidence="1">Virion membrane</location>
        <topology evidence="1">Single-pass type I membrane protein</topology>
    </subcellularLocation>
</comment>
<comment type="similarity">
    <text evidence="3">Belongs to the torovirinae spike protein family.</text>
</comment>
<comment type="sequence caution" evidence="3">
    <conflict type="frameshift">
        <sequence resource="EMBL-CDS" id="AAS17959"/>
    </conflict>
</comment>
<accession>O90304</accession>
<accession>Q3T8J0</accession>
<reference key="1">
    <citation type="journal article" date="1998" name="Virus Res.">
        <title>Bovine torovirus: sequencing of the structural genes and expression of the nucleocapsid protein of Breda virus.</title>
        <authorList>
            <person name="Duckmanton L.M."/>
            <person name="Tellier R."/>
            <person name="Liu P."/>
            <person name="Petric M."/>
        </authorList>
    </citation>
    <scope>NUCLEOTIDE SEQUENCE [GENOMIC RNA]</scope>
</reference>
<reference key="2">
    <citation type="journal article" date="2006" name="Virus Res.">
        <title>The complete sequence of the bovine torovirus genome.</title>
        <authorList>
            <person name="Draker R."/>
            <person name="Roper R.L."/>
            <person name="Petric M."/>
            <person name="Tellier R."/>
        </authorList>
    </citation>
    <scope>NUCLEOTIDE SEQUENCE [GENOMIC RNA]</scope>
</reference>
<sequence>MFLCFCTAPILCLWINSGGAVVVSNESLVVCEPVSYPYSLQVLRSFSQRVNLRTKRAVTTDAWSFAYQISTSSLNVNGWYVNFTSPLGWSYPNGKLFGIVLGSDAMMRASVSTFTYDVISYVGQRPNLDCQINDLANGGLESRYSTVRVDNCGNYPCHGGGKPGCSIGHPYMANGVRTRVLLTTQSPGIQYEIYSGQDYAVYQITPYTQYTVTMPSGTSGYCQQTPLYVECGSWTPYRVHAYGCDKATQSCNYTISSDWVVAFKSKASAIILRSQLIVALAQKLSRTVGVNKAVYFWFLKQPYHYLSLVNFSPNYALFSPLCKSLRQQSATYSALSYGSPFFVAQECYNNALYLPDCCLYTLFSILFSWDYQVNYPVNNVLQANETFLQLPTTGYLGQTVSQGRMLNLFKDAIVFLDFYDTKFYRTNDGPGGDIFAVVVKQVPVIAYSAFRIEQQTGYLAVKCNGVIQATLAPHSSRVVLLARHMSMWSIAAANSTTIYCPIYTLTSFVRLDISTSWYFHTLAQPSGPIQQVSMPVLSTGAAGVYMHPMIEHWVTLLAQSSVYQPSMFNMGVNKSVTLTTQLQAYAQVYTAWFLSILYTRLPESRRLTLGAQLTPFIQALLSFKQADIDATDVDTVARYNVLILMWGRKYAAVIYNQLPEWSYPLFKGGVGDSMWFRKKFLVTTKIHQTASHFPFIAGYLDFLDYKYIPKYKDVACPLSTMVPSILQVYETPQLFVIIVQCVSTTYSWYPGLRNPHTIYRSYKLGTICVLVPYSSPTDVYSSFGFFFQSALTIPTVQTTDDILPGCVGFVQDSVFTPCHPSGCPVRNSYDNYIICPGSSASNYTLRNYYRTTTPVTNVPIEEVPLQLEIPTVSLTSYELKQSESVLLQDIEGGIVVDHNTGSIWYPGGQAYDVSFYVSVIIRYAPPKLELPSTLANFTSCLDYICFGNQQCRGEAQTFCTSMDYFEQVFNKSLTSLITALQDLHYVLKLVLPETTLELTEDTRRRRRAVDEFSDTISLLSESFERFMSPASQAYMANMMWWDEAFDGISLPQRTGSILSSAPSLSSISSWHSYSSRTPLISNVKTPKTTFNVKLSMPKLPKASTLSTIGSVLSSGLSIASLGLSIFSIIEDRRVIELTQQQIMALEDQITILAGYTTKNFEEIQSSLNTLGQQVQDFSQTSALSLQQLSNGFEQITQQLDKSIYYVMAVQQYATYMSSLVNQLNELSQAVYKTQDMYITCIHSLQSGVLSPNCITPFQICHLYQVAKNLSSGECQPILSEREISRFYSLPLVTDAMVHNDTYWFSWSIPITCSNILGSVYKVQPGYIVNPHHPTSLQYDVPTHVVTSNAGALIFDEHYCDRYNQVYLCTKSAFDLAEASYLTMLYSNQTDNSSLTFHPAPRPDPCVYLSASALYCYYSDECHQCVIAVGNCTNRTVTYENYTYPIMDPQCRGFDQITISSPIAIGADFTALPSRPPLPLHLSYVNVTFNVTLPNELNWTDLVLDYSFKDKVYEISKNITQLHEQILQVSNWASGWFQRLRDFLYGLIPAWITWLTLGFSLFSILISGVNIILFFEMNGKVKKS</sequence>
<protein>
    <recommendedName>
        <fullName>Spike glycoprotein</fullName>
        <shortName>S glycoprotein</shortName>
    </recommendedName>
    <alternativeName>
        <fullName>E2</fullName>
    </alternativeName>
    <alternativeName>
        <fullName>Peplomer protein</fullName>
    </alternativeName>
</protein>
<organism>
    <name type="scientific">Breda virus 1</name>
    <name type="common">BRV-1</name>
    <dbReference type="NCBI Taxonomy" id="360393"/>
    <lineage>
        <taxon>Viruses</taxon>
        <taxon>Riboviria</taxon>
        <taxon>Orthornavirae</taxon>
        <taxon>Pisuviricota</taxon>
        <taxon>Pisoniviricetes</taxon>
        <taxon>Nidovirales</taxon>
        <taxon>Tornidovirineae</taxon>
        <taxon>Tobaniviridae</taxon>
        <taxon>Torovirinae</taxon>
        <taxon>Torovirus</taxon>
        <taxon>Renitovirus</taxon>
        <taxon>Bovine torovirus</taxon>
    </lineage>
</organism>
<organismHost>
    <name type="scientific">Bos taurus</name>
    <name type="common">Bovine</name>
    <dbReference type="NCBI Taxonomy" id="9913"/>
</organismHost>
<name>SPIKE_BRV1</name>
<keyword id="KW-1168">Fusion of virus membrane with host membrane</keyword>
<keyword id="KW-0325">Glycoprotein</keyword>
<keyword id="KW-0945">Host-virus interaction</keyword>
<keyword id="KW-0472">Membrane</keyword>
<keyword id="KW-1185">Reference proteome</keyword>
<keyword id="KW-0732">Signal</keyword>
<keyword id="KW-0812">Transmembrane</keyword>
<keyword id="KW-1133">Transmembrane helix</keyword>
<keyword id="KW-1161">Viral attachment to host cell</keyword>
<keyword id="KW-0261">Viral envelope protein</keyword>
<keyword id="KW-1162">Viral penetration into host cytoplasm</keyword>
<keyword id="KW-0946">Virion</keyword>
<keyword id="KW-0843">Virulence</keyword>
<keyword id="KW-1160">Virus entry into host cell</keyword>
<proteinExistence type="inferred from homology"/>